<accession>Q2J8L3</accession>
<reference key="1">
    <citation type="journal article" date="2007" name="Genome Res.">
        <title>Genome characteristics of facultatively symbiotic Frankia sp. strains reflect host range and host plant biogeography.</title>
        <authorList>
            <person name="Normand P."/>
            <person name="Lapierre P."/>
            <person name="Tisa L.S."/>
            <person name="Gogarten J.P."/>
            <person name="Alloisio N."/>
            <person name="Bagnarol E."/>
            <person name="Bassi C.A."/>
            <person name="Berry A.M."/>
            <person name="Bickhart D.M."/>
            <person name="Choisne N."/>
            <person name="Couloux A."/>
            <person name="Cournoyer B."/>
            <person name="Cruveiller S."/>
            <person name="Daubin V."/>
            <person name="Demange N."/>
            <person name="Francino M.P."/>
            <person name="Goltsman E."/>
            <person name="Huang Y."/>
            <person name="Kopp O.R."/>
            <person name="Labarre L."/>
            <person name="Lapidus A."/>
            <person name="Lavire C."/>
            <person name="Marechal J."/>
            <person name="Martinez M."/>
            <person name="Mastronunzio J.E."/>
            <person name="Mullin B.C."/>
            <person name="Niemann J."/>
            <person name="Pujic P."/>
            <person name="Rawnsley T."/>
            <person name="Rouy Z."/>
            <person name="Schenowitz C."/>
            <person name="Sellstedt A."/>
            <person name="Tavares F."/>
            <person name="Tomkins J.P."/>
            <person name="Vallenet D."/>
            <person name="Valverde C."/>
            <person name="Wall L.G."/>
            <person name="Wang Y."/>
            <person name="Medigue C."/>
            <person name="Benson D.R."/>
        </authorList>
    </citation>
    <scope>NUCLEOTIDE SEQUENCE [LARGE SCALE GENOMIC DNA]</scope>
    <source>
        <strain>DSM 45818 / CECT 9043 / HFP020203 / CcI3</strain>
    </source>
</reference>
<proteinExistence type="inferred from homology"/>
<protein>
    <recommendedName>
        <fullName evidence="1">Imidazole glycerol phosphate synthase subunit HisF</fullName>
        <ecNumber evidence="1">4.3.2.10</ecNumber>
    </recommendedName>
    <alternativeName>
        <fullName evidence="1">IGP synthase cyclase subunit</fullName>
    </alternativeName>
    <alternativeName>
        <fullName evidence="1">IGP synthase subunit HisF</fullName>
    </alternativeName>
    <alternativeName>
        <fullName evidence="1">ImGP synthase subunit HisF</fullName>
        <shortName evidence="1">IGPS subunit HisF</shortName>
    </alternativeName>
</protein>
<dbReference type="EC" id="4.3.2.10" evidence="1"/>
<dbReference type="EMBL" id="CP000249">
    <property type="protein sequence ID" value="ABD12379.1"/>
    <property type="molecule type" value="Genomic_DNA"/>
</dbReference>
<dbReference type="RefSeq" id="WP_011437407.1">
    <property type="nucleotide sequence ID" value="NZ_LRTJ01000043.1"/>
</dbReference>
<dbReference type="SMR" id="Q2J8L3"/>
<dbReference type="STRING" id="106370.Francci3_3022"/>
<dbReference type="KEGG" id="fra:Francci3_3022"/>
<dbReference type="eggNOG" id="COG0107">
    <property type="taxonomic scope" value="Bacteria"/>
</dbReference>
<dbReference type="HOGENOM" id="CLU_048577_4_0_11"/>
<dbReference type="OrthoDB" id="9781903at2"/>
<dbReference type="PhylomeDB" id="Q2J8L3"/>
<dbReference type="UniPathway" id="UPA00031">
    <property type="reaction ID" value="UER00010"/>
</dbReference>
<dbReference type="Proteomes" id="UP000001937">
    <property type="component" value="Chromosome"/>
</dbReference>
<dbReference type="GO" id="GO:0005737">
    <property type="term" value="C:cytoplasm"/>
    <property type="evidence" value="ECO:0007669"/>
    <property type="project" value="UniProtKB-SubCell"/>
</dbReference>
<dbReference type="GO" id="GO:0000107">
    <property type="term" value="F:imidazoleglycerol-phosphate synthase activity"/>
    <property type="evidence" value="ECO:0007669"/>
    <property type="project" value="UniProtKB-UniRule"/>
</dbReference>
<dbReference type="GO" id="GO:0016829">
    <property type="term" value="F:lyase activity"/>
    <property type="evidence" value="ECO:0007669"/>
    <property type="project" value="UniProtKB-KW"/>
</dbReference>
<dbReference type="GO" id="GO:0000105">
    <property type="term" value="P:L-histidine biosynthetic process"/>
    <property type="evidence" value="ECO:0007669"/>
    <property type="project" value="UniProtKB-UniRule"/>
</dbReference>
<dbReference type="CDD" id="cd04731">
    <property type="entry name" value="HisF"/>
    <property type="match status" value="1"/>
</dbReference>
<dbReference type="FunFam" id="3.20.20.70:FF:000006">
    <property type="entry name" value="Imidazole glycerol phosphate synthase subunit HisF"/>
    <property type="match status" value="1"/>
</dbReference>
<dbReference type="Gene3D" id="3.20.20.70">
    <property type="entry name" value="Aldolase class I"/>
    <property type="match status" value="1"/>
</dbReference>
<dbReference type="HAMAP" id="MF_01013">
    <property type="entry name" value="HisF"/>
    <property type="match status" value="1"/>
</dbReference>
<dbReference type="InterPro" id="IPR013785">
    <property type="entry name" value="Aldolase_TIM"/>
</dbReference>
<dbReference type="InterPro" id="IPR006062">
    <property type="entry name" value="His_biosynth"/>
</dbReference>
<dbReference type="InterPro" id="IPR004651">
    <property type="entry name" value="HisF"/>
</dbReference>
<dbReference type="InterPro" id="IPR050064">
    <property type="entry name" value="IGPS_HisA/HisF"/>
</dbReference>
<dbReference type="InterPro" id="IPR011060">
    <property type="entry name" value="RibuloseP-bd_barrel"/>
</dbReference>
<dbReference type="NCBIfam" id="TIGR00735">
    <property type="entry name" value="hisF"/>
    <property type="match status" value="1"/>
</dbReference>
<dbReference type="PANTHER" id="PTHR21235:SF2">
    <property type="entry name" value="IMIDAZOLE GLYCEROL PHOSPHATE SYNTHASE HISHF"/>
    <property type="match status" value="1"/>
</dbReference>
<dbReference type="PANTHER" id="PTHR21235">
    <property type="entry name" value="IMIDAZOLE GLYCEROL PHOSPHATE SYNTHASE SUBUNIT HISF/H IGP SYNTHASE SUBUNIT HISF/H"/>
    <property type="match status" value="1"/>
</dbReference>
<dbReference type="Pfam" id="PF00977">
    <property type="entry name" value="His_biosynth"/>
    <property type="match status" value="1"/>
</dbReference>
<dbReference type="SUPFAM" id="SSF51366">
    <property type="entry name" value="Ribulose-phoshate binding barrel"/>
    <property type="match status" value="1"/>
</dbReference>
<keyword id="KW-0028">Amino-acid biosynthesis</keyword>
<keyword id="KW-0963">Cytoplasm</keyword>
<keyword id="KW-0368">Histidine biosynthesis</keyword>
<keyword id="KW-0456">Lyase</keyword>
<keyword id="KW-1185">Reference proteome</keyword>
<organism>
    <name type="scientific">Frankia casuarinae (strain DSM 45818 / CECT 9043 / HFP020203 / CcI3)</name>
    <dbReference type="NCBI Taxonomy" id="106370"/>
    <lineage>
        <taxon>Bacteria</taxon>
        <taxon>Bacillati</taxon>
        <taxon>Actinomycetota</taxon>
        <taxon>Actinomycetes</taxon>
        <taxon>Frankiales</taxon>
        <taxon>Frankiaceae</taxon>
        <taxon>Frankia</taxon>
    </lineage>
</organism>
<sequence length="254" mass="26676">MSVAVRVIPCLDVDAGRVVKGVNFTDLRDAGDPVEMARLYDAEGADELTFLDITASSGDRETTYDIVRRTAEQVFIPLTVGGGVRSVDDVNRLLRAGADKVGINTAAVARPELVRECAHRFGNQCIVISVDARRPPGPDGPRFEVTTHGGRKGTGIDAVAWTARVVELGAGEILLNSMDADGTRDGYDLEMICAVRAEVDVPVIASGGAGDLAHFAPAIDAGADAVLAASVFHFGQLRIGEVKTALRGAGVPVR</sequence>
<comment type="function">
    <text evidence="1">IGPS catalyzes the conversion of PRFAR and glutamine to IGP, AICAR and glutamate. The HisF subunit catalyzes the cyclization activity that produces IGP and AICAR from PRFAR using the ammonia provided by the HisH subunit.</text>
</comment>
<comment type="catalytic activity">
    <reaction evidence="1">
        <text>5-[(5-phospho-1-deoxy-D-ribulos-1-ylimino)methylamino]-1-(5-phospho-beta-D-ribosyl)imidazole-4-carboxamide + L-glutamine = D-erythro-1-(imidazol-4-yl)glycerol 3-phosphate + 5-amino-1-(5-phospho-beta-D-ribosyl)imidazole-4-carboxamide + L-glutamate + H(+)</text>
        <dbReference type="Rhea" id="RHEA:24793"/>
        <dbReference type="ChEBI" id="CHEBI:15378"/>
        <dbReference type="ChEBI" id="CHEBI:29985"/>
        <dbReference type="ChEBI" id="CHEBI:58278"/>
        <dbReference type="ChEBI" id="CHEBI:58359"/>
        <dbReference type="ChEBI" id="CHEBI:58475"/>
        <dbReference type="ChEBI" id="CHEBI:58525"/>
        <dbReference type="EC" id="4.3.2.10"/>
    </reaction>
</comment>
<comment type="pathway">
    <text evidence="1">Amino-acid biosynthesis; L-histidine biosynthesis; L-histidine from 5-phospho-alpha-D-ribose 1-diphosphate: step 5/9.</text>
</comment>
<comment type="subunit">
    <text evidence="1">Heterodimer of HisH and HisF.</text>
</comment>
<comment type="subcellular location">
    <subcellularLocation>
        <location evidence="1">Cytoplasm</location>
    </subcellularLocation>
</comment>
<comment type="similarity">
    <text evidence="1">Belongs to the HisA/HisF family.</text>
</comment>
<evidence type="ECO:0000255" key="1">
    <source>
        <dbReference type="HAMAP-Rule" id="MF_01013"/>
    </source>
</evidence>
<gene>
    <name evidence="1" type="primary">hisF</name>
    <name type="ordered locus">Francci3_3022</name>
</gene>
<name>HIS6_FRACC</name>
<feature type="chain" id="PRO_1000063063" description="Imidazole glycerol phosphate synthase subunit HisF">
    <location>
        <begin position="1"/>
        <end position="254"/>
    </location>
</feature>
<feature type="active site" evidence="1">
    <location>
        <position position="12"/>
    </location>
</feature>
<feature type="active site" evidence="1">
    <location>
        <position position="131"/>
    </location>
</feature>